<keyword id="KW-0114">cAMP</keyword>
<keyword id="KW-0116">cAMP-binding</keyword>
<keyword id="KW-0130">Cell adhesion</keyword>
<keyword id="KW-0965">Cell junction</keyword>
<keyword id="KW-1003">Cell membrane</keyword>
<keyword id="KW-0217">Developmental protein</keyword>
<keyword id="KW-0325">Glycoprotein</keyword>
<keyword id="KW-0472">Membrane</keyword>
<keyword id="KW-0547">Nucleotide-binding</keyword>
<keyword id="KW-0597">Phosphoprotein</keyword>
<keyword id="KW-1185">Reference proteome</keyword>
<keyword id="KW-0796">Tight junction</keyword>
<keyword id="KW-0812">Transmembrane</keyword>
<keyword id="KW-1133">Transmembrane helix</keyword>
<feature type="chain" id="PRO_0000394477" description="Popeye domain-containing protein 1">
    <location>
        <begin position="1"/>
        <end position="356"/>
    </location>
</feature>
<feature type="topological domain" description="Extracellular" evidence="5">
    <location>
        <begin position="1"/>
        <end position="48"/>
    </location>
</feature>
<feature type="transmembrane region" description="Helical" evidence="5">
    <location>
        <begin position="49"/>
        <end position="69"/>
    </location>
</feature>
<feature type="topological domain" description="Cytoplasmic" evidence="5">
    <location>
        <position position="70"/>
    </location>
</feature>
<feature type="transmembrane region" description="Helical" evidence="5">
    <location>
        <begin position="71"/>
        <end position="91"/>
    </location>
</feature>
<feature type="topological domain" description="Extracellular" evidence="5">
    <location>
        <position position="92"/>
    </location>
</feature>
<feature type="transmembrane region" description="Helical" evidence="5">
    <location>
        <begin position="93"/>
        <end position="113"/>
    </location>
</feature>
<feature type="topological domain" description="Cytoplasmic" evidence="5">
    <location>
        <begin position="114"/>
        <end position="356"/>
    </location>
</feature>
<feature type="region of interest" description="Required for interaction with CAV3" evidence="4">
    <location>
        <begin position="93"/>
        <end position="115"/>
    </location>
</feature>
<feature type="region of interest" description="Required for interaction with KCNK2" evidence="2">
    <location>
        <begin position="136"/>
        <end position="186"/>
    </location>
</feature>
<feature type="region of interest" description="Disordered" evidence="6">
    <location>
        <begin position="313"/>
        <end position="356"/>
    </location>
</feature>
<feature type="compositionally biased region" description="Low complexity" evidence="6">
    <location>
        <begin position="313"/>
        <end position="323"/>
    </location>
</feature>
<feature type="modified residue" description="Phosphoserine" evidence="10">
    <location>
        <position position="295"/>
    </location>
</feature>
<feature type="modified residue" description="Phosphoserine" evidence="10">
    <location>
        <position position="318"/>
    </location>
</feature>
<feature type="glycosylation site" description="N-linked (GlcNAc...) asparagine" evidence="5">
    <location>
        <position position="2"/>
    </location>
</feature>
<feature type="glycosylation site" description="N-linked (GlcNAc...) asparagine" evidence="5">
    <location>
        <position position="30"/>
    </location>
</feature>
<reference key="1">
    <citation type="journal article" date="2007" name="Biochim. Biophys. Acta">
        <title>The Popdc gene family in the rat: molecular cloning, characterization and expression analysis in the heart and cultured cardiomyocytes.</title>
        <authorList>
            <person name="Parnes D."/>
            <person name="Jacoby V."/>
            <person name="Sharabi A."/>
            <person name="Schlesinger H."/>
            <person name="Brand T."/>
            <person name="Kessler-Icekson G."/>
        </authorList>
    </citation>
    <scope>NUCLEOTIDE SEQUENCE [MRNA]</scope>
    <scope>TISSUE SPECIFICITY</scope>
    <source>
        <strain>Wistar</strain>
        <tissue>Heart</tissue>
    </source>
</reference>
<reference key="2">
    <citation type="journal article" date="2012" name="Nat. Commun.">
        <title>Quantitative maps of protein phosphorylation sites across 14 different rat organs and tissues.</title>
        <authorList>
            <person name="Lundby A."/>
            <person name="Secher A."/>
            <person name="Lage K."/>
            <person name="Nordsborg N.B."/>
            <person name="Dmytriyev A."/>
            <person name="Lundby C."/>
            <person name="Olsen J.V."/>
        </authorList>
    </citation>
    <scope>PHOSPHORYLATION [LARGE SCALE ANALYSIS] AT SER-295 AND SER-318</scope>
    <scope>IDENTIFICATION BY MASS SPECTROMETRY [LARGE SCALE ANALYSIS]</scope>
</reference>
<reference key="3">
    <citation type="journal article" date="2013" name="PLoS ONE">
        <title>Popeye domain containing 1 (Popdc1/Bves) is a caveolae-associated protein involved in ischemia tolerance.</title>
        <authorList>
            <person name="Alcalay Y."/>
            <person name="Hochhauser E."/>
            <person name="Kliminski V."/>
            <person name="Dick J."/>
            <person name="Zahalka M.A."/>
            <person name="Parnes D."/>
            <person name="Schlesinger H."/>
            <person name="Abassi Z."/>
            <person name="Shainberg A."/>
            <person name="Schindler R.F."/>
            <person name="Brand T."/>
            <person name="Kessler-Icekson G."/>
        </authorList>
    </citation>
    <scope>SUBCELLULAR LOCATION</scope>
    <scope>TISSUE SPECIFICITY</scope>
</reference>
<sequence length="356" mass="40860">MNFTEPSPLAQSTVVGFLPELESLTPVPSNETSCENWREVHHLVFHAANVCFAVGLLIPTTLHLHMILLRVMLSIGCTLYVVWATLYRCALDMMIWNSVFLGINILHLSYLLYKKRPVKIEKDLGGVYHRLFEPLRVPPDLFRRLTGQFCVIQTLKRGQVYATEDKTSVDDRLSILLKGRMKVSYRGHFLHNIYPCAFIDSPEFRSTQMHKGEKFQVTIVADDNCRFLCWSRERLTYFLESEPFLYEIFRYLIGKDITNKLYSLNDPTLNDKKVKKLEPQMSLSTQISMLEMRNSITSSSDIEDGLHHFLRGSSSTASLPMSSPQQRASPKMKPIEEGLEDDDEVFVPVSPAHQLP</sequence>
<gene>
    <name type="primary">Popdc1</name>
    <name type="synonym">Bves</name>
    <name type="synonym">Pop1</name>
</gene>
<accession>Q3BCU4</accession>
<proteinExistence type="evidence at protein level"/>
<name>POPD1_RAT</name>
<evidence type="ECO:0000250" key="1">
    <source>
        <dbReference type="UniProtKB" id="Q5PQZ7"/>
    </source>
</evidence>
<evidence type="ECO:0000250" key="2">
    <source>
        <dbReference type="UniProtKB" id="Q8NE79"/>
    </source>
</evidence>
<evidence type="ECO:0000250" key="3">
    <source>
        <dbReference type="UniProtKB" id="Q9DG23"/>
    </source>
</evidence>
<evidence type="ECO:0000250" key="4">
    <source>
        <dbReference type="UniProtKB" id="Q9ES83"/>
    </source>
</evidence>
<evidence type="ECO:0000255" key="5"/>
<evidence type="ECO:0000256" key="6">
    <source>
        <dbReference type="SAM" id="MobiDB-lite"/>
    </source>
</evidence>
<evidence type="ECO:0000269" key="7">
    <source>
    </source>
</evidence>
<evidence type="ECO:0000269" key="8">
    <source>
    </source>
</evidence>
<evidence type="ECO:0000305" key="9"/>
<evidence type="ECO:0007744" key="10">
    <source>
    </source>
</evidence>
<organism>
    <name type="scientific">Rattus norvegicus</name>
    <name type="common">Rat</name>
    <dbReference type="NCBI Taxonomy" id="10116"/>
    <lineage>
        <taxon>Eukaryota</taxon>
        <taxon>Metazoa</taxon>
        <taxon>Chordata</taxon>
        <taxon>Craniata</taxon>
        <taxon>Vertebrata</taxon>
        <taxon>Euteleostomi</taxon>
        <taxon>Mammalia</taxon>
        <taxon>Eutheria</taxon>
        <taxon>Euarchontoglires</taxon>
        <taxon>Glires</taxon>
        <taxon>Rodentia</taxon>
        <taxon>Myomorpha</taxon>
        <taxon>Muroidea</taxon>
        <taxon>Muridae</taxon>
        <taxon>Murinae</taxon>
        <taxon>Rattus</taxon>
    </lineage>
</organism>
<dbReference type="EMBL" id="AY786529">
    <property type="protein sequence ID" value="AAX14396.2"/>
    <property type="molecule type" value="mRNA"/>
</dbReference>
<dbReference type="RefSeq" id="NP_001071058.1">
    <property type="nucleotide sequence ID" value="NM_001077590.3"/>
</dbReference>
<dbReference type="RefSeq" id="NP_001421574.1">
    <property type="nucleotide sequence ID" value="NM_001434645.1"/>
</dbReference>
<dbReference type="RefSeq" id="NP_001421575.1">
    <property type="nucleotide sequence ID" value="NM_001434646.1"/>
</dbReference>
<dbReference type="SMR" id="Q3BCU4"/>
<dbReference type="FunCoup" id="Q3BCU4">
    <property type="interactions" value="662"/>
</dbReference>
<dbReference type="GlyCosmos" id="Q3BCU4">
    <property type="glycosylation" value="2 sites, No reported glycans"/>
</dbReference>
<dbReference type="GlyGen" id="Q3BCU4">
    <property type="glycosylation" value="2 sites"/>
</dbReference>
<dbReference type="iPTMnet" id="Q3BCU4"/>
<dbReference type="PhosphoSitePlus" id="Q3BCU4"/>
<dbReference type="SwissPalm" id="Q3BCU4"/>
<dbReference type="Ensembl" id="ENSRNOT00000066167.5">
    <property type="protein sequence ID" value="ENSRNOP00000091870.1"/>
    <property type="gene ID" value="ENSRNOG00000043199.5"/>
</dbReference>
<dbReference type="GeneID" id="365603"/>
<dbReference type="KEGG" id="rno:365603"/>
<dbReference type="UCSC" id="RGD:1561100">
    <property type="organism name" value="rat"/>
</dbReference>
<dbReference type="AGR" id="RGD:1561100"/>
<dbReference type="CTD" id="11149"/>
<dbReference type="RGD" id="1561100">
    <property type="gene designation" value="Bves"/>
</dbReference>
<dbReference type="GeneTree" id="ENSGT00390000002563"/>
<dbReference type="InParanoid" id="Q3BCU4"/>
<dbReference type="OMA" id="SCQEWEQ"/>
<dbReference type="OrthoDB" id="425611at2759"/>
<dbReference type="PhylomeDB" id="Q3BCU4"/>
<dbReference type="PRO" id="PR:Q3BCU4"/>
<dbReference type="Proteomes" id="UP000002494">
    <property type="component" value="Chromosome 20"/>
</dbReference>
<dbReference type="GO" id="GO:0005923">
    <property type="term" value="C:bicellular tight junction"/>
    <property type="evidence" value="ECO:0000250"/>
    <property type="project" value="UniProtKB"/>
</dbReference>
<dbReference type="GO" id="GO:0005901">
    <property type="term" value="C:caveola"/>
    <property type="evidence" value="ECO:0000250"/>
    <property type="project" value="UniProtKB"/>
</dbReference>
<dbReference type="GO" id="GO:0031253">
    <property type="term" value="C:cell projection membrane"/>
    <property type="evidence" value="ECO:0000266"/>
    <property type="project" value="RGD"/>
</dbReference>
<dbReference type="GO" id="GO:0016328">
    <property type="term" value="C:lateral plasma membrane"/>
    <property type="evidence" value="ECO:0000250"/>
    <property type="project" value="UniProtKB"/>
</dbReference>
<dbReference type="GO" id="GO:0016020">
    <property type="term" value="C:membrane"/>
    <property type="evidence" value="ECO:0000250"/>
    <property type="project" value="UniProtKB"/>
</dbReference>
<dbReference type="GO" id="GO:0005886">
    <property type="term" value="C:plasma membrane"/>
    <property type="evidence" value="ECO:0000250"/>
    <property type="project" value="UniProtKB"/>
</dbReference>
<dbReference type="GO" id="GO:0042383">
    <property type="term" value="C:sarcolemma"/>
    <property type="evidence" value="ECO:0000250"/>
    <property type="project" value="UniProtKB"/>
</dbReference>
<dbReference type="GO" id="GO:0030552">
    <property type="term" value="F:cAMP binding"/>
    <property type="evidence" value="ECO:0000266"/>
    <property type="project" value="RGD"/>
</dbReference>
<dbReference type="GO" id="GO:0005198">
    <property type="term" value="F:structural molecule activity"/>
    <property type="evidence" value="ECO:0000250"/>
    <property type="project" value="UniProtKB"/>
</dbReference>
<dbReference type="GO" id="GO:0060973">
    <property type="term" value="P:cell migration involved in heart development"/>
    <property type="evidence" value="ECO:0000266"/>
    <property type="project" value="RGD"/>
</dbReference>
<dbReference type="GO" id="GO:0090136">
    <property type="term" value="P:epithelial cell-cell adhesion"/>
    <property type="evidence" value="ECO:0000250"/>
    <property type="project" value="UniProtKB"/>
</dbReference>
<dbReference type="GO" id="GO:0007507">
    <property type="term" value="P:heart development"/>
    <property type="evidence" value="ECO:0000250"/>
    <property type="project" value="UniProtKB"/>
</dbReference>
<dbReference type="GO" id="GO:0002244">
    <property type="term" value="P:hematopoietic progenitor cell differentiation"/>
    <property type="evidence" value="ECO:0000266"/>
    <property type="project" value="RGD"/>
</dbReference>
<dbReference type="GO" id="GO:0040017">
    <property type="term" value="P:positive regulation of locomotion"/>
    <property type="evidence" value="ECO:0000250"/>
    <property type="project" value="UniProtKB"/>
</dbReference>
<dbReference type="GO" id="GO:0001921">
    <property type="term" value="P:positive regulation of receptor recycling"/>
    <property type="evidence" value="ECO:0000250"/>
    <property type="project" value="UniProtKB"/>
</dbReference>
<dbReference type="GO" id="GO:0008360">
    <property type="term" value="P:regulation of cell shape"/>
    <property type="evidence" value="ECO:0000250"/>
    <property type="project" value="UniProtKB"/>
</dbReference>
<dbReference type="GO" id="GO:2001135">
    <property type="term" value="P:regulation of endocytic recycling"/>
    <property type="evidence" value="ECO:0000266"/>
    <property type="project" value="RGD"/>
</dbReference>
<dbReference type="GO" id="GO:0043087">
    <property type="term" value="P:regulation of GTPase activity"/>
    <property type="evidence" value="ECO:0000250"/>
    <property type="project" value="UniProtKB"/>
</dbReference>
<dbReference type="GO" id="GO:0002027">
    <property type="term" value="P:regulation of heart rate"/>
    <property type="evidence" value="ECO:0000266"/>
    <property type="project" value="RGD"/>
</dbReference>
<dbReference type="GO" id="GO:0042391">
    <property type="term" value="P:regulation of membrane potential"/>
    <property type="evidence" value="ECO:0000266"/>
    <property type="project" value="RGD"/>
</dbReference>
<dbReference type="GO" id="GO:0002931">
    <property type="term" value="P:response to ischemia"/>
    <property type="evidence" value="ECO:0000250"/>
    <property type="project" value="UniProtKB"/>
</dbReference>
<dbReference type="GO" id="GO:0060931">
    <property type="term" value="P:sinoatrial node cell development"/>
    <property type="evidence" value="ECO:0000266"/>
    <property type="project" value="RGD"/>
</dbReference>
<dbReference type="GO" id="GO:0007519">
    <property type="term" value="P:skeletal muscle tissue development"/>
    <property type="evidence" value="ECO:0000250"/>
    <property type="project" value="UniProtKB"/>
</dbReference>
<dbReference type="GO" id="GO:0051146">
    <property type="term" value="P:striated muscle cell differentiation"/>
    <property type="evidence" value="ECO:0000318"/>
    <property type="project" value="GO_Central"/>
</dbReference>
<dbReference type="GO" id="GO:0034446">
    <property type="term" value="P:substrate adhesion-dependent cell spreading"/>
    <property type="evidence" value="ECO:0000250"/>
    <property type="project" value="UniProtKB"/>
</dbReference>
<dbReference type="GO" id="GO:0048278">
    <property type="term" value="P:vesicle docking"/>
    <property type="evidence" value="ECO:0000266"/>
    <property type="project" value="RGD"/>
</dbReference>
<dbReference type="GO" id="GO:0016192">
    <property type="term" value="P:vesicle-mediated transport"/>
    <property type="evidence" value="ECO:0000250"/>
    <property type="project" value="UniProtKB"/>
</dbReference>
<dbReference type="FunFam" id="2.60.120.10:FF:000166">
    <property type="entry name" value="blood vessel epicardial substance isoform X1"/>
    <property type="match status" value="1"/>
</dbReference>
<dbReference type="Gene3D" id="2.60.120.10">
    <property type="entry name" value="Jelly Rolls"/>
    <property type="match status" value="1"/>
</dbReference>
<dbReference type="InterPro" id="IPR018490">
    <property type="entry name" value="cNMP-bd_dom_sf"/>
</dbReference>
<dbReference type="InterPro" id="IPR006916">
    <property type="entry name" value="POPDC1-3"/>
</dbReference>
<dbReference type="InterPro" id="IPR055272">
    <property type="entry name" value="POPDC1-3_dom"/>
</dbReference>
<dbReference type="InterPro" id="IPR014710">
    <property type="entry name" value="RmlC-like_jellyroll"/>
</dbReference>
<dbReference type="PANTHER" id="PTHR12101:SF17">
    <property type="entry name" value="BLOOD VESSEL EPICARDIAL SUBSTANCE"/>
    <property type="match status" value="1"/>
</dbReference>
<dbReference type="PANTHER" id="PTHR12101">
    <property type="entry name" value="POPEYE DOMAIN CONTAINING PROTEIN"/>
    <property type="match status" value="1"/>
</dbReference>
<dbReference type="Pfam" id="PF04831">
    <property type="entry name" value="POPDC1-3"/>
    <property type="match status" value="1"/>
</dbReference>
<dbReference type="SUPFAM" id="SSF51206">
    <property type="entry name" value="cAMP-binding domain-like"/>
    <property type="match status" value="1"/>
</dbReference>
<comment type="function">
    <text evidence="1 2 4">Cell adhesion molecule involved in the establishment and/or maintenance of cell integrity. Involved in the formation and regulation of the tight junction (TJ) paracellular permeability barrier in epithelial cells. Plays a role in VAMP3-mediated vesicular transport and recycling of different receptor molecules through its interaction with VAMP3. Plays a role in the regulation of cell shape and movement by modulating the Rho-family GTPase activity through its interaction with ARHGEF25/GEFT. Induces primordial adhesive contact and aggregation of epithelial cells in a Ca(2+)-independent manner. Important for skeletal muscle and heart development. Also involved in striated muscle regeneration and repair and in the regulation of cell spreading (By similarity). Important for the maintenance of cardiac function. Plays a regulatory function in heart rate dynamics mediated, at least in part, through cAMP-binding and, probably, by increasing cell surface expression of the potassium channel KCNK2 and enhancing current density. Is a caveolae-associated protein important for the preservation of caveolae structural and functional integrity as well as for heart protection against ischemia injury (By similarity).</text>
</comment>
<comment type="subunit">
    <text evidence="2 3 4">Homodimer. Homodimerization requires the C-terminus cytoplasmic region (By similarity). Interacts (via the C-terminus cytoplasmic tail) with TJP1. Interacts (via the C-terminus cytoplasmic tail) with ARHGEF25/GEFT (via the DH domain). Interacts (via the C-terminus cytoplasmic tail) with VAMP3. Interacts with KCNK2; the interaction enhances KCNK2 surface expression and is inhibited by cAMP (By similarity). Interacts with CAV3 (By similarity).</text>
</comment>
<comment type="subcellular location">
    <subcellularLocation>
        <location evidence="2">Lateral cell membrane</location>
    </subcellularLocation>
    <subcellularLocation>
        <location evidence="2">Cell junction</location>
        <location evidence="2">Tight junction</location>
    </subcellularLocation>
    <subcellularLocation>
        <location evidence="9">Membrane</location>
        <topology evidence="9">Multi-pass membrane protein</topology>
    </subcellularLocation>
    <subcellularLocation>
        <location evidence="8">Cell membrane</location>
        <location evidence="8">Sarcolemma</location>
    </subcellularLocation>
    <subcellularLocation>
        <location evidence="8">Membrane</location>
        <location evidence="8">Caveola</location>
    </subcellularLocation>
    <text evidence="4">Colocalizes with VAMP3 at the cell-cell contact in cardiac and skeletal muscle (By similarity). Its movement from the cytoplasm to membrane is an early event occurring concurrently with cell-cell contact. Colocalizes in epithelial cells with OCLN and TJP1 in an apical-lateral position within the z axis. Detected at cell-cell contact but never observed at the free surface of epithelial cells (By similarity).</text>
</comment>
<comment type="tissue specificity">
    <text evidence="7 8">Strongly expressed in heart and skeletal muscle. Weakly expressed in brain, spleen, liver, kidney and lung.</text>
</comment>
<comment type="similarity">
    <text evidence="9">Belongs to the popeye family.</text>
</comment>
<protein>
    <recommendedName>
        <fullName>Popeye domain-containing protein 1</fullName>
        <shortName>Popeye protein 1</shortName>
    </recommendedName>
    <alternativeName>
        <fullName>Blood vessel epicardial substance</fullName>
    </alternativeName>
</protein>